<sequence length="330" mass="35527">MSKAPVRVAVTGAAGQIGYSLLFRIASGEMLGKDQPVILQLLDLPQAQKAVKGVMMELEDCAFPLLAGMIATDDPNVAFKDAKVALLVGARPRGPGMERKDLLTENAKIFTVQGAAIGQYADPDCKVLVVGNPCNTNAYIAKEVAQKYGRVPAKNFTGMLRLDHNRALSQLAGKSGREVSSLKNLVVWGNHSPTMYADYRFVKSNGDSVKDLINDAAWNKDVFLPTVGKRGAAIIEARGLSSAASAANAAIDHIRDWVLGSNGEWVTMGIPSDGSYGIPEGVIYGFPVTTENGEYKIVQGLEIDEFSRERMTVTLNELLEEREGVKDLLA</sequence>
<proteinExistence type="inferred from homology"/>
<protein>
    <recommendedName>
        <fullName evidence="1">Malate dehydrogenase</fullName>
        <ecNumber evidence="1">1.1.1.37</ecNumber>
    </recommendedName>
</protein>
<gene>
    <name evidence="1" type="primary">mdh</name>
    <name type="ordered locus">azo1547</name>
</gene>
<accession>A1K5Q9</accession>
<feature type="chain" id="PRO_0000294374" description="Malate dehydrogenase">
    <location>
        <begin position="1"/>
        <end position="330"/>
    </location>
</feature>
<feature type="active site" description="Proton acceptor" evidence="1">
    <location>
        <position position="191"/>
    </location>
</feature>
<feature type="binding site" evidence="1">
    <location>
        <begin position="12"/>
        <end position="18"/>
    </location>
    <ligand>
        <name>NAD(+)</name>
        <dbReference type="ChEBI" id="CHEBI:57540"/>
    </ligand>
</feature>
<feature type="binding site" evidence="1">
    <location>
        <position position="93"/>
    </location>
    <ligand>
        <name>substrate</name>
    </ligand>
</feature>
<feature type="binding site" evidence="1">
    <location>
        <position position="99"/>
    </location>
    <ligand>
        <name>substrate</name>
    </ligand>
</feature>
<feature type="binding site" evidence="1">
    <location>
        <position position="106"/>
    </location>
    <ligand>
        <name>NAD(+)</name>
        <dbReference type="ChEBI" id="CHEBI:57540"/>
    </ligand>
</feature>
<feature type="binding site" evidence="1">
    <location>
        <position position="113"/>
    </location>
    <ligand>
        <name>NAD(+)</name>
        <dbReference type="ChEBI" id="CHEBI:57540"/>
    </ligand>
</feature>
<feature type="binding site" evidence="1">
    <location>
        <begin position="130"/>
        <end position="132"/>
    </location>
    <ligand>
        <name>NAD(+)</name>
        <dbReference type="ChEBI" id="CHEBI:57540"/>
    </ligand>
</feature>
<feature type="binding site" evidence="1">
    <location>
        <position position="132"/>
    </location>
    <ligand>
        <name>substrate</name>
    </ligand>
</feature>
<feature type="binding site" evidence="1">
    <location>
        <position position="166"/>
    </location>
    <ligand>
        <name>substrate</name>
    </ligand>
</feature>
<comment type="function">
    <text evidence="1">Catalyzes the reversible oxidation of malate to oxaloacetate.</text>
</comment>
<comment type="catalytic activity">
    <reaction evidence="1">
        <text>(S)-malate + NAD(+) = oxaloacetate + NADH + H(+)</text>
        <dbReference type="Rhea" id="RHEA:21432"/>
        <dbReference type="ChEBI" id="CHEBI:15378"/>
        <dbReference type="ChEBI" id="CHEBI:15589"/>
        <dbReference type="ChEBI" id="CHEBI:16452"/>
        <dbReference type="ChEBI" id="CHEBI:57540"/>
        <dbReference type="ChEBI" id="CHEBI:57945"/>
        <dbReference type="EC" id="1.1.1.37"/>
    </reaction>
</comment>
<comment type="similarity">
    <text evidence="1">Belongs to the LDH/MDH superfamily. MDH type 2 family.</text>
</comment>
<reference key="1">
    <citation type="journal article" date="2006" name="Nat. Biotechnol.">
        <title>Complete genome of the mutualistic, N2-fixing grass endophyte Azoarcus sp. strain BH72.</title>
        <authorList>
            <person name="Krause A."/>
            <person name="Ramakumar A."/>
            <person name="Bartels D."/>
            <person name="Battistoni F."/>
            <person name="Bekel T."/>
            <person name="Boch J."/>
            <person name="Boehm M."/>
            <person name="Friedrich F."/>
            <person name="Hurek T."/>
            <person name="Krause L."/>
            <person name="Linke B."/>
            <person name="McHardy A.C."/>
            <person name="Sarkar A."/>
            <person name="Schneiker S."/>
            <person name="Syed A.A."/>
            <person name="Thauer R."/>
            <person name="Vorhoelter F.-J."/>
            <person name="Weidner S."/>
            <person name="Puehler A."/>
            <person name="Reinhold-Hurek B."/>
            <person name="Kaiser O."/>
            <person name="Goesmann A."/>
        </authorList>
    </citation>
    <scope>NUCLEOTIDE SEQUENCE [LARGE SCALE GENOMIC DNA]</scope>
    <source>
        <strain>BH72</strain>
    </source>
</reference>
<evidence type="ECO:0000255" key="1">
    <source>
        <dbReference type="HAMAP-Rule" id="MF_01517"/>
    </source>
</evidence>
<dbReference type="EC" id="1.1.1.37" evidence="1"/>
<dbReference type="EMBL" id="AM406670">
    <property type="protein sequence ID" value="CAL94164.1"/>
    <property type="molecule type" value="Genomic_DNA"/>
</dbReference>
<dbReference type="RefSeq" id="WP_011765280.1">
    <property type="nucleotide sequence ID" value="NC_008702.1"/>
</dbReference>
<dbReference type="SMR" id="A1K5Q9"/>
<dbReference type="STRING" id="62928.azo1547"/>
<dbReference type="KEGG" id="aoa:dqs_1670"/>
<dbReference type="KEGG" id="azo:azo1547"/>
<dbReference type="eggNOG" id="COG0039">
    <property type="taxonomic scope" value="Bacteria"/>
</dbReference>
<dbReference type="HOGENOM" id="CLU_040727_2_0_4"/>
<dbReference type="OrthoDB" id="9802969at2"/>
<dbReference type="Proteomes" id="UP000002588">
    <property type="component" value="Chromosome"/>
</dbReference>
<dbReference type="GO" id="GO:0030060">
    <property type="term" value="F:L-malate dehydrogenase (NAD+) activity"/>
    <property type="evidence" value="ECO:0007669"/>
    <property type="project" value="UniProtKB-UniRule"/>
</dbReference>
<dbReference type="GO" id="GO:0006108">
    <property type="term" value="P:malate metabolic process"/>
    <property type="evidence" value="ECO:0007669"/>
    <property type="project" value="InterPro"/>
</dbReference>
<dbReference type="GO" id="GO:0006099">
    <property type="term" value="P:tricarboxylic acid cycle"/>
    <property type="evidence" value="ECO:0007669"/>
    <property type="project" value="UniProtKB-UniRule"/>
</dbReference>
<dbReference type="CDD" id="cd01338">
    <property type="entry name" value="MDH_chloroplast-like"/>
    <property type="match status" value="1"/>
</dbReference>
<dbReference type="FunFam" id="3.40.50.720:FF:000010">
    <property type="entry name" value="Malate dehydrogenase"/>
    <property type="match status" value="1"/>
</dbReference>
<dbReference type="FunFam" id="3.90.110.10:FF:000002">
    <property type="entry name" value="Malate dehydrogenase"/>
    <property type="match status" value="1"/>
</dbReference>
<dbReference type="Gene3D" id="3.90.110.10">
    <property type="entry name" value="Lactate dehydrogenase/glycoside hydrolase, family 4, C-terminal"/>
    <property type="match status" value="1"/>
</dbReference>
<dbReference type="Gene3D" id="3.40.50.720">
    <property type="entry name" value="NAD(P)-binding Rossmann-like Domain"/>
    <property type="match status" value="1"/>
</dbReference>
<dbReference type="HAMAP" id="MF_01517">
    <property type="entry name" value="Malate_dehydrog_2"/>
    <property type="match status" value="1"/>
</dbReference>
<dbReference type="InterPro" id="IPR001557">
    <property type="entry name" value="L-lactate/malate_DH"/>
</dbReference>
<dbReference type="InterPro" id="IPR022383">
    <property type="entry name" value="Lactate/malate_DH_C"/>
</dbReference>
<dbReference type="InterPro" id="IPR001236">
    <property type="entry name" value="Lactate/malate_DH_N"/>
</dbReference>
<dbReference type="InterPro" id="IPR015955">
    <property type="entry name" value="Lactate_DH/Glyco_Ohase_4_C"/>
</dbReference>
<dbReference type="InterPro" id="IPR010945">
    <property type="entry name" value="Malate_DH_type2"/>
</dbReference>
<dbReference type="InterPro" id="IPR036291">
    <property type="entry name" value="NAD(P)-bd_dom_sf"/>
</dbReference>
<dbReference type="NCBIfam" id="TIGR01759">
    <property type="entry name" value="MalateDH-SF1"/>
    <property type="match status" value="1"/>
</dbReference>
<dbReference type="NCBIfam" id="NF003916">
    <property type="entry name" value="PRK05442.1"/>
    <property type="match status" value="1"/>
</dbReference>
<dbReference type="PANTHER" id="PTHR23382">
    <property type="entry name" value="MALATE DEHYDROGENASE"/>
    <property type="match status" value="1"/>
</dbReference>
<dbReference type="Pfam" id="PF02866">
    <property type="entry name" value="Ldh_1_C"/>
    <property type="match status" value="1"/>
</dbReference>
<dbReference type="Pfam" id="PF00056">
    <property type="entry name" value="Ldh_1_N"/>
    <property type="match status" value="1"/>
</dbReference>
<dbReference type="PIRSF" id="PIRSF000102">
    <property type="entry name" value="Lac_mal_DH"/>
    <property type="match status" value="1"/>
</dbReference>
<dbReference type="SUPFAM" id="SSF56327">
    <property type="entry name" value="LDH C-terminal domain-like"/>
    <property type="match status" value="1"/>
</dbReference>
<dbReference type="SUPFAM" id="SSF51735">
    <property type="entry name" value="NAD(P)-binding Rossmann-fold domains"/>
    <property type="match status" value="1"/>
</dbReference>
<organism>
    <name type="scientific">Azoarcus sp. (strain BH72)</name>
    <dbReference type="NCBI Taxonomy" id="418699"/>
    <lineage>
        <taxon>Bacteria</taxon>
        <taxon>Pseudomonadati</taxon>
        <taxon>Pseudomonadota</taxon>
        <taxon>Betaproteobacteria</taxon>
        <taxon>Rhodocyclales</taxon>
        <taxon>Zoogloeaceae</taxon>
        <taxon>Azoarcus</taxon>
    </lineage>
</organism>
<keyword id="KW-0520">NAD</keyword>
<keyword id="KW-0560">Oxidoreductase</keyword>
<keyword id="KW-1185">Reference proteome</keyword>
<keyword id="KW-0816">Tricarboxylic acid cycle</keyword>
<name>MDH_AZOSB</name>